<evidence type="ECO:0000255" key="1">
    <source>
        <dbReference type="HAMAP-Rule" id="MF_00168"/>
    </source>
</evidence>
<comment type="function">
    <text evidence="1">Catalyzes the base-exchange of a guanine (G) residue with the queuine precursor 7-aminomethyl-7-deazaguanine (PreQ1) at position 34 (anticodon wobble position) in tRNAs with GU(N) anticodons (tRNA-Asp, -Asn, -His and -Tyr). Catalysis occurs through a double-displacement mechanism. The nucleophile active site attacks the C1' of nucleotide 34 to detach the guanine base from the RNA, forming a covalent enzyme-RNA intermediate. The proton acceptor active site deprotonates the incoming PreQ1, allowing a nucleophilic attack on the C1' of the ribose to form the product. After dissociation, two additional enzymatic reactions on the tRNA convert PreQ1 to queuine (Q), resulting in the hypermodified nucleoside queuosine (7-(((4,5-cis-dihydroxy-2-cyclopenten-1-yl)amino)methyl)-7-deazaguanosine).</text>
</comment>
<comment type="catalytic activity">
    <reaction evidence="1">
        <text>7-aminomethyl-7-carbaguanine + guanosine(34) in tRNA = 7-aminomethyl-7-carbaguanosine(34) in tRNA + guanine</text>
        <dbReference type="Rhea" id="RHEA:24104"/>
        <dbReference type="Rhea" id="RHEA-COMP:10341"/>
        <dbReference type="Rhea" id="RHEA-COMP:10342"/>
        <dbReference type="ChEBI" id="CHEBI:16235"/>
        <dbReference type="ChEBI" id="CHEBI:58703"/>
        <dbReference type="ChEBI" id="CHEBI:74269"/>
        <dbReference type="ChEBI" id="CHEBI:82833"/>
        <dbReference type="EC" id="2.4.2.29"/>
    </reaction>
</comment>
<comment type="cofactor">
    <cofactor evidence="1">
        <name>Zn(2+)</name>
        <dbReference type="ChEBI" id="CHEBI:29105"/>
    </cofactor>
    <text evidence="1">Binds 1 zinc ion per subunit.</text>
</comment>
<comment type="subunit">
    <text evidence="1">Homodimer. Within each dimer, one monomer is responsible for RNA recognition and catalysis, while the other monomer binds to the replacement base PreQ1.</text>
</comment>
<comment type="similarity">
    <text evidence="1">Belongs to the queuine tRNA-ribosyltransferase family.</text>
</comment>
<protein>
    <recommendedName>
        <fullName evidence="1">Putative queuine tRNA-ribosyltransferase</fullName>
        <ecNumber evidence="1">2.4.2.29</ecNumber>
    </recommendedName>
    <alternativeName>
        <fullName evidence="1">Guanine insertion enzyme</fullName>
    </alternativeName>
    <alternativeName>
        <fullName evidence="1">tRNA-guanine transglycosylase</fullName>
    </alternativeName>
</protein>
<sequence length="403" mass="46396">MPLKFRIKHTLDRMRVGKVKTRHGSFETPVFIPVATLAAIRGLDNRDLKDMGVEVILANTYHLHLRPGDELIKELGGLHKFMNFDGVIVTDSGGFQAFSLGFGMEHGVGKIANNIFLEELREERLREAENERKKLAVVTDRGVRFKDPKSGRIVELTPKKSMEIQSNLGSDIIFAFDECTSPLSDRDYTEKALERTHRWAEECLQHYDRRQALFGVVQGGEYRDLREKSARFMAERDFAGYGIGGSLGKSKQDMLNILDWVIPLLPEEKPRHLLGIGAIEDLFNCTEKGVDMYDCVAPARWARRGHLYVSPAEGGNVRNKFRIHIKNAAFRIDNRPVDRTCDCLVCQNYSRAYLRHLYKANELLYFRLATYHNIYFVVKLMERIRESIADGSFYELKREWLGF</sequence>
<reference key="1">
    <citation type="journal article" date="1997" name="Nature">
        <title>The complete genome sequence of the hyperthermophilic, sulphate-reducing archaeon Archaeoglobus fulgidus.</title>
        <authorList>
            <person name="Klenk H.-P."/>
            <person name="Clayton R.A."/>
            <person name="Tomb J.-F."/>
            <person name="White O."/>
            <person name="Nelson K.E."/>
            <person name="Ketchum K.A."/>
            <person name="Dodson R.J."/>
            <person name="Gwinn M.L."/>
            <person name="Hickey E.K."/>
            <person name="Peterson J.D."/>
            <person name="Richardson D.L."/>
            <person name="Kerlavage A.R."/>
            <person name="Graham D.E."/>
            <person name="Kyrpides N.C."/>
            <person name="Fleischmann R.D."/>
            <person name="Quackenbush J."/>
            <person name="Lee N.H."/>
            <person name="Sutton G.G."/>
            <person name="Gill S.R."/>
            <person name="Kirkness E.F."/>
            <person name="Dougherty B.A."/>
            <person name="McKenney K."/>
            <person name="Adams M.D."/>
            <person name="Loftus B.J."/>
            <person name="Peterson S.N."/>
            <person name="Reich C.I."/>
            <person name="McNeil L.K."/>
            <person name="Badger J.H."/>
            <person name="Glodek A."/>
            <person name="Zhou L."/>
            <person name="Overbeek R."/>
            <person name="Gocayne J.D."/>
            <person name="Weidman J.F."/>
            <person name="McDonald L.A."/>
            <person name="Utterback T.R."/>
            <person name="Cotton M.D."/>
            <person name="Spriggs T."/>
            <person name="Artiach P."/>
            <person name="Kaine B.P."/>
            <person name="Sykes S.M."/>
            <person name="Sadow P.W."/>
            <person name="D'Andrea K.P."/>
            <person name="Bowman C."/>
            <person name="Fujii C."/>
            <person name="Garland S.A."/>
            <person name="Mason T.M."/>
            <person name="Olsen G.J."/>
            <person name="Fraser C.M."/>
            <person name="Smith H.O."/>
            <person name="Woese C.R."/>
            <person name="Venter J.C."/>
        </authorList>
    </citation>
    <scope>NUCLEOTIDE SEQUENCE [LARGE SCALE GENOMIC DNA]</scope>
    <source>
        <strain>ATCC 49558 / DSM 4304 / JCM 9628 / NBRC 100126 / VC-16</strain>
    </source>
</reference>
<feature type="chain" id="PRO_0000135564" description="Putative queuine tRNA-ribosyltransferase">
    <location>
        <begin position="1"/>
        <end position="403"/>
    </location>
</feature>
<feature type="region of interest" description="RNA binding" evidence="1">
    <location>
        <begin position="275"/>
        <end position="281"/>
    </location>
</feature>
<feature type="region of interest" description="RNA binding; important for wobble base 34 recognition" evidence="1">
    <location>
        <begin position="299"/>
        <end position="303"/>
    </location>
</feature>
<feature type="active site" description="Proton acceptor" evidence="1">
    <location>
        <position position="91"/>
    </location>
</feature>
<feature type="active site" description="Nucleophile" evidence="1">
    <location>
        <position position="294"/>
    </location>
</feature>
<feature type="binding site" evidence="1">
    <location>
        <begin position="91"/>
        <end position="95"/>
    </location>
    <ligand>
        <name>substrate</name>
    </ligand>
</feature>
<feature type="binding site" evidence="1">
    <location>
        <position position="177"/>
    </location>
    <ligand>
        <name>substrate</name>
    </ligand>
</feature>
<feature type="binding site" evidence="1">
    <location>
        <position position="218"/>
    </location>
    <ligand>
        <name>substrate</name>
    </ligand>
</feature>
<feature type="binding site" evidence="1">
    <location>
        <position position="245"/>
    </location>
    <ligand>
        <name>substrate</name>
    </ligand>
</feature>
<feature type="binding site" evidence="1">
    <location>
        <position position="341"/>
    </location>
    <ligand>
        <name>Zn(2+)</name>
        <dbReference type="ChEBI" id="CHEBI:29105"/>
    </ligand>
</feature>
<feature type="binding site" evidence="1">
    <location>
        <position position="343"/>
    </location>
    <ligand>
        <name>Zn(2+)</name>
        <dbReference type="ChEBI" id="CHEBI:29105"/>
    </ligand>
</feature>
<feature type="binding site" evidence="1">
    <location>
        <position position="346"/>
    </location>
    <ligand>
        <name>Zn(2+)</name>
        <dbReference type="ChEBI" id="CHEBI:29105"/>
    </ligand>
</feature>
<feature type="binding site" evidence="1">
    <location>
        <position position="372"/>
    </location>
    <ligand>
        <name>Zn(2+)</name>
        <dbReference type="ChEBI" id="CHEBI:29105"/>
    </ligand>
</feature>
<keyword id="KW-0328">Glycosyltransferase</keyword>
<keyword id="KW-0479">Metal-binding</keyword>
<keyword id="KW-1185">Reference proteome</keyword>
<keyword id="KW-0808">Transferase</keyword>
<keyword id="KW-0819">tRNA processing</keyword>
<keyword id="KW-0862">Zinc</keyword>
<gene>
    <name evidence="1" type="primary">tgt</name>
    <name type="ordered locus">AF_1485</name>
</gene>
<proteinExistence type="inferred from homology"/>
<organism>
    <name type="scientific">Archaeoglobus fulgidus (strain ATCC 49558 / DSM 4304 / JCM 9628 / NBRC 100126 / VC-16)</name>
    <dbReference type="NCBI Taxonomy" id="224325"/>
    <lineage>
        <taxon>Archaea</taxon>
        <taxon>Methanobacteriati</taxon>
        <taxon>Methanobacteriota</taxon>
        <taxon>Archaeoglobi</taxon>
        <taxon>Archaeoglobales</taxon>
        <taxon>Archaeoglobaceae</taxon>
        <taxon>Archaeoglobus</taxon>
    </lineage>
</organism>
<accession>O28787</accession>
<dbReference type="EC" id="2.4.2.29" evidence="1"/>
<dbReference type="EMBL" id="AE000782">
    <property type="protein sequence ID" value="AAB89762.1"/>
    <property type="molecule type" value="Genomic_DNA"/>
</dbReference>
<dbReference type="PIR" id="D69435">
    <property type="entry name" value="D69435"/>
</dbReference>
<dbReference type="RefSeq" id="WP_010878982.1">
    <property type="nucleotide sequence ID" value="NC_000917.1"/>
</dbReference>
<dbReference type="SMR" id="O28787"/>
<dbReference type="STRING" id="224325.AF_1485"/>
<dbReference type="PaxDb" id="224325-AF_1485"/>
<dbReference type="EnsemblBacteria" id="AAB89762">
    <property type="protein sequence ID" value="AAB89762"/>
    <property type="gene ID" value="AF_1485"/>
</dbReference>
<dbReference type="GeneID" id="1484711"/>
<dbReference type="KEGG" id="afu:AF_1485"/>
<dbReference type="eggNOG" id="arCOG00989">
    <property type="taxonomic scope" value="Archaea"/>
</dbReference>
<dbReference type="HOGENOM" id="CLU_022060_0_2_2"/>
<dbReference type="OrthoDB" id="6871at2157"/>
<dbReference type="PhylomeDB" id="O28787"/>
<dbReference type="Proteomes" id="UP000002199">
    <property type="component" value="Chromosome"/>
</dbReference>
<dbReference type="GO" id="GO:0005829">
    <property type="term" value="C:cytosol"/>
    <property type="evidence" value="ECO:0007669"/>
    <property type="project" value="TreeGrafter"/>
</dbReference>
<dbReference type="GO" id="GO:0046872">
    <property type="term" value="F:metal ion binding"/>
    <property type="evidence" value="ECO:0007669"/>
    <property type="project" value="UniProtKB-KW"/>
</dbReference>
<dbReference type="GO" id="GO:0008479">
    <property type="term" value="F:tRNA-guanosine(34) queuine transglycosylase activity"/>
    <property type="evidence" value="ECO:0007669"/>
    <property type="project" value="InterPro"/>
</dbReference>
<dbReference type="GO" id="GO:0008616">
    <property type="term" value="P:queuosine biosynthetic process"/>
    <property type="evidence" value="ECO:0007669"/>
    <property type="project" value="TreeGrafter"/>
</dbReference>
<dbReference type="GO" id="GO:0002099">
    <property type="term" value="P:tRNA wobble guanine modification"/>
    <property type="evidence" value="ECO:0007669"/>
    <property type="project" value="TreeGrafter"/>
</dbReference>
<dbReference type="GO" id="GO:0101030">
    <property type="term" value="P:tRNA-guanine transglycosylation"/>
    <property type="evidence" value="ECO:0007669"/>
    <property type="project" value="InterPro"/>
</dbReference>
<dbReference type="Gene3D" id="3.20.20.105">
    <property type="entry name" value="Queuine tRNA-ribosyltransferase-like"/>
    <property type="match status" value="1"/>
</dbReference>
<dbReference type="HAMAP" id="MF_00168">
    <property type="entry name" value="Q_tRNA_Tgt"/>
    <property type="match status" value="1"/>
</dbReference>
<dbReference type="InterPro" id="IPR050076">
    <property type="entry name" value="ArchSynthase1/Queuine_TRR"/>
</dbReference>
<dbReference type="InterPro" id="IPR004803">
    <property type="entry name" value="TGT"/>
</dbReference>
<dbReference type="InterPro" id="IPR036511">
    <property type="entry name" value="TGT-like_sf"/>
</dbReference>
<dbReference type="InterPro" id="IPR002616">
    <property type="entry name" value="tRNA_ribo_trans-like"/>
</dbReference>
<dbReference type="NCBIfam" id="TIGR00430">
    <property type="entry name" value="Q_tRNA_tgt"/>
    <property type="match status" value="1"/>
</dbReference>
<dbReference type="NCBIfam" id="TIGR00449">
    <property type="entry name" value="tgt_general"/>
    <property type="match status" value="1"/>
</dbReference>
<dbReference type="PANTHER" id="PTHR46499">
    <property type="entry name" value="QUEUINE TRNA-RIBOSYLTRANSFERASE"/>
    <property type="match status" value="1"/>
</dbReference>
<dbReference type="PANTHER" id="PTHR46499:SF1">
    <property type="entry name" value="QUEUINE TRNA-RIBOSYLTRANSFERASE"/>
    <property type="match status" value="1"/>
</dbReference>
<dbReference type="Pfam" id="PF01702">
    <property type="entry name" value="TGT"/>
    <property type="match status" value="2"/>
</dbReference>
<dbReference type="SUPFAM" id="SSF51713">
    <property type="entry name" value="tRNA-guanine transglycosylase"/>
    <property type="match status" value="1"/>
</dbReference>
<name>TGT_ARCFU</name>